<dbReference type="EC" id="3.6.1.-" evidence="1"/>
<dbReference type="EMBL" id="AL590842">
    <property type="protein sequence ID" value="CAL19458.1"/>
    <property type="molecule type" value="Genomic_DNA"/>
</dbReference>
<dbReference type="EMBL" id="AE009952">
    <property type="protein sequence ID" value="AAM86724.1"/>
    <property type="molecule type" value="Genomic_DNA"/>
</dbReference>
<dbReference type="EMBL" id="AE017042">
    <property type="protein sequence ID" value="AAS63054.1"/>
    <property type="molecule type" value="Genomic_DNA"/>
</dbReference>
<dbReference type="PIR" id="AH0096">
    <property type="entry name" value="AH0096"/>
</dbReference>
<dbReference type="RefSeq" id="WP_002211381.1">
    <property type="nucleotide sequence ID" value="NZ_WUCM01000007.1"/>
</dbReference>
<dbReference type="RefSeq" id="YP_002345841.1">
    <property type="nucleotide sequence ID" value="NC_003143.1"/>
</dbReference>
<dbReference type="SMR" id="Q8ZHU8"/>
<dbReference type="STRING" id="214092.YPO0786"/>
<dbReference type="PaxDb" id="214092-YPO0786"/>
<dbReference type="DNASU" id="1148121"/>
<dbReference type="EnsemblBacteria" id="AAS63054">
    <property type="protein sequence ID" value="AAS63054"/>
    <property type="gene ID" value="YP_2872"/>
</dbReference>
<dbReference type="GeneID" id="57973848"/>
<dbReference type="KEGG" id="ype:YPO0786"/>
<dbReference type="KEGG" id="ypk:y3174"/>
<dbReference type="KEGG" id="ypm:YP_2872"/>
<dbReference type="PATRIC" id="fig|214092.21.peg.1049"/>
<dbReference type="eggNOG" id="COG1051">
    <property type="taxonomic scope" value="Bacteria"/>
</dbReference>
<dbReference type="HOGENOM" id="CLU_087195_3_2_6"/>
<dbReference type="OMA" id="PCVGIML"/>
<dbReference type="OrthoDB" id="9816040at2"/>
<dbReference type="Proteomes" id="UP000000815">
    <property type="component" value="Chromosome"/>
</dbReference>
<dbReference type="Proteomes" id="UP000001019">
    <property type="component" value="Chromosome"/>
</dbReference>
<dbReference type="Proteomes" id="UP000002490">
    <property type="component" value="Chromosome"/>
</dbReference>
<dbReference type="GO" id="GO:0005737">
    <property type="term" value="C:cytoplasm"/>
    <property type="evidence" value="ECO:0000318"/>
    <property type="project" value="GO_Central"/>
</dbReference>
<dbReference type="GO" id="GO:0034353">
    <property type="term" value="F:mRNA 5'-diphosphatase activity"/>
    <property type="evidence" value="ECO:0000318"/>
    <property type="project" value="GO_Central"/>
</dbReference>
<dbReference type="GO" id="GO:0006402">
    <property type="term" value="P:mRNA catabolic process"/>
    <property type="evidence" value="ECO:0000318"/>
    <property type="project" value="GO_Central"/>
</dbReference>
<dbReference type="CDD" id="cd03671">
    <property type="entry name" value="NUDIX_Ap4A_hydrolase_plant_like"/>
    <property type="match status" value="1"/>
</dbReference>
<dbReference type="FunFam" id="3.90.79.10:FF:000001">
    <property type="entry name" value="RNA pyrophosphohydrolase"/>
    <property type="match status" value="1"/>
</dbReference>
<dbReference type="Gene3D" id="3.90.79.10">
    <property type="entry name" value="Nucleoside Triphosphate Pyrophosphohydrolase"/>
    <property type="match status" value="1"/>
</dbReference>
<dbReference type="HAMAP" id="MF_00298">
    <property type="entry name" value="Nudix_RppH"/>
    <property type="match status" value="1"/>
</dbReference>
<dbReference type="InterPro" id="IPR020476">
    <property type="entry name" value="Nudix_hydrolase"/>
</dbReference>
<dbReference type="InterPro" id="IPR015797">
    <property type="entry name" value="NUDIX_hydrolase-like_dom_sf"/>
</dbReference>
<dbReference type="InterPro" id="IPR020084">
    <property type="entry name" value="NUDIX_hydrolase_CS"/>
</dbReference>
<dbReference type="InterPro" id="IPR000086">
    <property type="entry name" value="NUDIX_hydrolase_dom"/>
</dbReference>
<dbReference type="InterPro" id="IPR022927">
    <property type="entry name" value="RppH"/>
</dbReference>
<dbReference type="NCBIfam" id="NF001934">
    <property type="entry name" value="PRK00714.1-1"/>
    <property type="match status" value="1"/>
</dbReference>
<dbReference type="NCBIfam" id="NF001937">
    <property type="entry name" value="PRK00714.1-4"/>
    <property type="match status" value="1"/>
</dbReference>
<dbReference type="NCBIfam" id="NF001938">
    <property type="entry name" value="PRK00714.1-5"/>
    <property type="match status" value="1"/>
</dbReference>
<dbReference type="PANTHER" id="PTHR23114">
    <property type="entry name" value="M7GPPPN-MRNA HYDROLASE"/>
    <property type="match status" value="1"/>
</dbReference>
<dbReference type="PANTHER" id="PTHR23114:SF17">
    <property type="entry name" value="M7GPPPN-MRNA HYDROLASE"/>
    <property type="match status" value="1"/>
</dbReference>
<dbReference type="Pfam" id="PF00293">
    <property type="entry name" value="NUDIX"/>
    <property type="match status" value="1"/>
</dbReference>
<dbReference type="PRINTS" id="PR00502">
    <property type="entry name" value="NUDIXFAMILY"/>
</dbReference>
<dbReference type="SUPFAM" id="SSF55811">
    <property type="entry name" value="Nudix"/>
    <property type="match status" value="1"/>
</dbReference>
<dbReference type="PROSITE" id="PS51462">
    <property type="entry name" value="NUDIX"/>
    <property type="match status" value="1"/>
</dbReference>
<dbReference type="PROSITE" id="PS00893">
    <property type="entry name" value="NUDIX_BOX"/>
    <property type="match status" value="1"/>
</dbReference>
<accession>Q8ZHU8</accession>
<accession>Q0WIP7</accession>
<protein>
    <recommendedName>
        <fullName evidence="1">RNA pyrophosphohydrolase</fullName>
        <ecNumber evidence="1">3.6.1.-</ecNumber>
    </recommendedName>
    <alternativeName>
        <fullName evidence="1">(Di)nucleoside polyphosphate hydrolase</fullName>
    </alternativeName>
</protein>
<comment type="function">
    <text evidence="1">Accelerates the degradation of transcripts by removing pyrophosphate from the 5'-end of triphosphorylated RNA, leading to a more labile monophosphorylated state that can stimulate subsequent ribonuclease cleavage.</text>
</comment>
<comment type="cofactor">
    <cofactor evidence="1">
        <name>a divalent metal cation</name>
        <dbReference type="ChEBI" id="CHEBI:60240"/>
    </cofactor>
</comment>
<comment type="similarity">
    <text evidence="1">Belongs to the Nudix hydrolase family. RppH subfamily.</text>
</comment>
<keyword id="KW-0378">Hydrolase</keyword>
<keyword id="KW-1185">Reference proteome</keyword>
<name>RPPH_YERPE</name>
<sequence length="175" mass="20893">MIDDDGYRPNVGIVICNRQGEVLWARRYGQHSWQFPQGGINPGETPEQAMYRELFEEVGLNKKDVRILASTRNWLRYKLPKRLVRWDTKPVCIGQKQRWFLLQLMCNEAEINMQRSSTPEFDGWRWVSYWYPVRQVVSFKRDVYRRVMKEFAATVMPVQEVAPPRVPPAYRRKRG</sequence>
<feature type="chain" id="PRO_0000057039" description="RNA pyrophosphohydrolase">
    <location>
        <begin position="1"/>
        <end position="175"/>
    </location>
</feature>
<feature type="domain" description="Nudix hydrolase" evidence="1">
    <location>
        <begin position="6"/>
        <end position="149"/>
    </location>
</feature>
<feature type="short sequence motif" description="Nudix box">
    <location>
        <begin position="38"/>
        <end position="59"/>
    </location>
</feature>
<evidence type="ECO:0000255" key="1">
    <source>
        <dbReference type="HAMAP-Rule" id="MF_00298"/>
    </source>
</evidence>
<reference key="1">
    <citation type="journal article" date="2001" name="Nature">
        <title>Genome sequence of Yersinia pestis, the causative agent of plague.</title>
        <authorList>
            <person name="Parkhill J."/>
            <person name="Wren B.W."/>
            <person name="Thomson N.R."/>
            <person name="Titball R.W."/>
            <person name="Holden M.T.G."/>
            <person name="Prentice M.B."/>
            <person name="Sebaihia M."/>
            <person name="James K.D."/>
            <person name="Churcher C.M."/>
            <person name="Mungall K.L."/>
            <person name="Baker S."/>
            <person name="Basham D."/>
            <person name="Bentley S.D."/>
            <person name="Brooks K."/>
            <person name="Cerdeno-Tarraga A.-M."/>
            <person name="Chillingworth T."/>
            <person name="Cronin A."/>
            <person name="Davies R.M."/>
            <person name="Davis P."/>
            <person name="Dougan G."/>
            <person name="Feltwell T."/>
            <person name="Hamlin N."/>
            <person name="Holroyd S."/>
            <person name="Jagels K."/>
            <person name="Karlyshev A.V."/>
            <person name="Leather S."/>
            <person name="Moule S."/>
            <person name="Oyston P.C.F."/>
            <person name="Quail M.A."/>
            <person name="Rutherford K.M."/>
            <person name="Simmonds M."/>
            <person name="Skelton J."/>
            <person name="Stevens K."/>
            <person name="Whitehead S."/>
            <person name="Barrell B.G."/>
        </authorList>
    </citation>
    <scope>NUCLEOTIDE SEQUENCE [LARGE SCALE GENOMIC DNA]</scope>
    <source>
        <strain>CO-92 / Biovar Orientalis</strain>
    </source>
</reference>
<reference key="2">
    <citation type="journal article" date="2002" name="J. Bacteriol.">
        <title>Genome sequence of Yersinia pestis KIM.</title>
        <authorList>
            <person name="Deng W."/>
            <person name="Burland V."/>
            <person name="Plunkett G. III"/>
            <person name="Boutin A."/>
            <person name="Mayhew G.F."/>
            <person name="Liss P."/>
            <person name="Perna N.T."/>
            <person name="Rose D.J."/>
            <person name="Mau B."/>
            <person name="Zhou S."/>
            <person name="Schwartz D.C."/>
            <person name="Fetherston J.D."/>
            <person name="Lindler L.E."/>
            <person name="Brubaker R.R."/>
            <person name="Plano G.V."/>
            <person name="Straley S.C."/>
            <person name="McDonough K.A."/>
            <person name="Nilles M.L."/>
            <person name="Matson J.S."/>
            <person name="Blattner F.R."/>
            <person name="Perry R.D."/>
        </authorList>
    </citation>
    <scope>NUCLEOTIDE SEQUENCE [LARGE SCALE GENOMIC DNA]</scope>
    <source>
        <strain>KIM10+ / Biovar Mediaevalis</strain>
    </source>
</reference>
<reference key="3">
    <citation type="journal article" date="2004" name="DNA Res.">
        <title>Complete genome sequence of Yersinia pestis strain 91001, an isolate avirulent to humans.</title>
        <authorList>
            <person name="Song Y."/>
            <person name="Tong Z."/>
            <person name="Wang J."/>
            <person name="Wang L."/>
            <person name="Guo Z."/>
            <person name="Han Y."/>
            <person name="Zhang J."/>
            <person name="Pei D."/>
            <person name="Zhou D."/>
            <person name="Qin H."/>
            <person name="Pang X."/>
            <person name="Han Y."/>
            <person name="Zhai J."/>
            <person name="Li M."/>
            <person name="Cui B."/>
            <person name="Qi Z."/>
            <person name="Jin L."/>
            <person name="Dai R."/>
            <person name="Chen F."/>
            <person name="Li S."/>
            <person name="Ye C."/>
            <person name="Du Z."/>
            <person name="Lin W."/>
            <person name="Wang J."/>
            <person name="Yu J."/>
            <person name="Yang H."/>
            <person name="Wang J."/>
            <person name="Huang P."/>
            <person name="Yang R."/>
        </authorList>
    </citation>
    <scope>NUCLEOTIDE SEQUENCE [LARGE SCALE GENOMIC DNA]</scope>
    <source>
        <strain>91001 / Biovar Mediaevalis</strain>
    </source>
</reference>
<gene>
    <name evidence="1" type="primary">rppH</name>
    <name evidence="1" type="synonym">nudH</name>
    <name type="ordered locus">YPO0786</name>
    <name type="ordered locus">y3174</name>
    <name type="ordered locus">YP_2872</name>
</gene>
<proteinExistence type="inferred from homology"/>
<organism>
    <name type="scientific">Yersinia pestis</name>
    <dbReference type="NCBI Taxonomy" id="632"/>
    <lineage>
        <taxon>Bacteria</taxon>
        <taxon>Pseudomonadati</taxon>
        <taxon>Pseudomonadota</taxon>
        <taxon>Gammaproteobacteria</taxon>
        <taxon>Enterobacterales</taxon>
        <taxon>Yersiniaceae</taxon>
        <taxon>Yersinia</taxon>
    </lineage>
</organism>